<accession>P25350</accession>
<accession>A0A1S0T049</accession>
<dbReference type="EMBL" id="Z11113">
    <property type="protein sequence ID" value="CAA77441.1"/>
    <property type="molecule type" value="Genomic_DNA"/>
</dbReference>
<dbReference type="EMBL" id="X59720">
    <property type="protein sequence ID" value="CAA42343.1"/>
    <property type="molecule type" value="Genomic_DNA"/>
</dbReference>
<dbReference type="EMBL" id="AY558372">
    <property type="protein sequence ID" value="AAS56698.1"/>
    <property type="molecule type" value="Genomic_DNA"/>
</dbReference>
<dbReference type="EMBL" id="BK006937">
    <property type="protein sequence ID" value="DAA80269.1"/>
    <property type="molecule type" value="Genomic_DNA"/>
</dbReference>
<dbReference type="PIR" id="S26735">
    <property type="entry name" value="S26735"/>
</dbReference>
<dbReference type="RefSeq" id="NP_001335749.1">
    <property type="nucleotide sequence ID" value="NM_001348894.1"/>
</dbReference>
<dbReference type="FunCoup" id="P25350">
    <property type="interactions" value="35"/>
</dbReference>
<dbReference type="PaxDb" id="4932-YCR006C"/>
<dbReference type="EnsemblFungi" id="YCR006C_mRNA">
    <property type="protein sequence ID" value="YCR006C"/>
    <property type="gene ID" value="YCR006C"/>
</dbReference>
<dbReference type="GeneID" id="850362"/>
<dbReference type="AGR" id="SGD:S000000599"/>
<dbReference type="SGD" id="S000000599">
    <property type="gene designation" value="YCR006C"/>
</dbReference>
<dbReference type="HOGENOM" id="CLU_1679330_0_0_1"/>
<dbReference type="InParanoid" id="P25350"/>
<dbReference type="OrthoDB" id="10287812at2759"/>
<dbReference type="PRO" id="PR:P25350"/>
<dbReference type="Proteomes" id="UP000002311">
    <property type="component" value="Chromosome III"/>
</dbReference>
<dbReference type="RNAct" id="P25350">
    <property type="molecule type" value="protein"/>
</dbReference>
<gene>
    <name type="ordered locus">YCR006C</name>
    <name type="ORF">YCR044</name>
    <name type="ORF">YCR6C</name>
</gene>
<protein>
    <recommendedName>
        <fullName>Uncharacterized protein YCR006C</fullName>
    </recommendedName>
</protein>
<reference key="1">
    <citation type="journal article" date="1992" name="Yeast">
        <title>The complete sequence of a 10.8kb fragment to the right of the chromosome III centromere of Saccharomyces cerevisiae.</title>
        <authorList>
            <person name="Biteau N."/>
            <person name="Fremaux C."/>
            <person name="Hebrard S."/>
            <person name="Menara A."/>
            <person name="Aigle M."/>
            <person name="Crouzet M."/>
        </authorList>
    </citation>
    <scope>NUCLEOTIDE SEQUENCE [GENOMIC DNA]</scope>
</reference>
<reference key="2">
    <citation type="journal article" date="1992" name="Nature">
        <title>The complete DNA sequence of yeast chromosome III.</title>
        <authorList>
            <person name="Oliver S.G."/>
            <person name="van der Aart Q.J.M."/>
            <person name="Agostoni-Carbone M.L."/>
            <person name="Aigle M."/>
            <person name="Alberghina L."/>
            <person name="Alexandraki D."/>
            <person name="Antoine G."/>
            <person name="Anwar R."/>
            <person name="Ballesta J.P.G."/>
            <person name="Benit P."/>
            <person name="Berben G."/>
            <person name="Bergantino E."/>
            <person name="Biteau N."/>
            <person name="Bolle P.-A."/>
            <person name="Bolotin-Fukuhara M."/>
            <person name="Brown A."/>
            <person name="Brown A.J.P."/>
            <person name="Buhler J.-M."/>
            <person name="Carcano C."/>
            <person name="Carignani G."/>
            <person name="Cederberg H."/>
            <person name="Chanet R."/>
            <person name="Contreras R."/>
            <person name="Crouzet M."/>
            <person name="Daignan-Fornier B."/>
            <person name="Defoor E."/>
            <person name="Delgado M.D."/>
            <person name="Demolder J."/>
            <person name="Doira C."/>
            <person name="Dubois E."/>
            <person name="Dujon B."/>
            <person name="Duesterhoeft A."/>
            <person name="Erdmann D."/>
            <person name="Esteban M."/>
            <person name="Fabre F."/>
            <person name="Fairhead C."/>
            <person name="Faye G."/>
            <person name="Feldmann H."/>
            <person name="Fiers W."/>
            <person name="Francingues-Gaillard M.-C."/>
            <person name="Franco L."/>
            <person name="Frontali L."/>
            <person name="Fukuhara H."/>
            <person name="Fuller L.J."/>
            <person name="Galland P."/>
            <person name="Gent M.E."/>
            <person name="Gigot D."/>
            <person name="Gilliquet V."/>
            <person name="Glansdorff N."/>
            <person name="Goffeau A."/>
            <person name="Grenson M."/>
            <person name="Grisanti P."/>
            <person name="Grivell L.A."/>
            <person name="de Haan M."/>
            <person name="Haasemann M."/>
            <person name="Hatat D."/>
            <person name="Hoenicka J."/>
            <person name="Hegemann J.H."/>
            <person name="Herbert C.J."/>
            <person name="Hilger F."/>
            <person name="Hohmann S."/>
            <person name="Hollenberg C.P."/>
            <person name="Huse K."/>
            <person name="Iborra F."/>
            <person name="Indge K.J."/>
            <person name="Isono K."/>
            <person name="Jacq C."/>
            <person name="Jacquet M."/>
            <person name="James C.M."/>
            <person name="Jauniaux J.-C."/>
            <person name="Jia Y."/>
            <person name="Jimenez A."/>
            <person name="Kelly A."/>
            <person name="Kleinhans U."/>
            <person name="Kreisl P."/>
            <person name="Lanfranchi G."/>
            <person name="Lewis C."/>
            <person name="van der Linden C.G."/>
            <person name="Lucchini G."/>
            <person name="Lutzenkirchen K."/>
            <person name="Maat M.J."/>
            <person name="Mallet L."/>
            <person name="Mannhaupt G."/>
            <person name="Martegani E."/>
            <person name="Mathieu A."/>
            <person name="Maurer C.T.C."/>
            <person name="McConnell D."/>
            <person name="McKee R.A."/>
            <person name="Messenguy F."/>
            <person name="Mewes H.-W."/>
            <person name="Molemans F."/>
            <person name="Montague M.A."/>
            <person name="Muzi Falconi M."/>
            <person name="Navas L."/>
            <person name="Newlon C.S."/>
            <person name="Noone D."/>
            <person name="Pallier C."/>
            <person name="Panzeri L."/>
            <person name="Pearson B.M."/>
            <person name="Perea J."/>
            <person name="Philippsen P."/>
            <person name="Pierard A."/>
            <person name="Planta R.J."/>
            <person name="Plevani P."/>
            <person name="Poetsch B."/>
            <person name="Pohl F.M."/>
            <person name="Purnelle B."/>
            <person name="Ramezani Rad M."/>
            <person name="Rasmussen S.W."/>
            <person name="Raynal A."/>
            <person name="Remacha M.A."/>
            <person name="Richterich P."/>
            <person name="Roberts A.B."/>
            <person name="Rodriguez F."/>
            <person name="Sanz E."/>
            <person name="Schaaff-Gerstenschlaeger I."/>
            <person name="Scherens B."/>
            <person name="Schweitzer B."/>
            <person name="Shu Y."/>
            <person name="Skala J."/>
            <person name="Slonimski P.P."/>
            <person name="Sor F."/>
            <person name="Soustelle C."/>
            <person name="Spiegelberg R."/>
            <person name="Stateva L.I."/>
            <person name="Steensma H.Y."/>
            <person name="Steiner S."/>
            <person name="Thierry A."/>
            <person name="Thireos G."/>
            <person name="Tzermia M."/>
            <person name="Urrestarazu L.A."/>
            <person name="Valle G."/>
            <person name="Vetter I."/>
            <person name="van Vliet-Reedijk J.C."/>
            <person name="Voet M."/>
            <person name="Volckaert G."/>
            <person name="Vreken P."/>
            <person name="Wang H."/>
            <person name="Warmington J.R."/>
            <person name="von Wettstein D."/>
            <person name="Wicksteed B.L."/>
            <person name="Wilson C."/>
            <person name="Wurst H."/>
            <person name="Xu G."/>
            <person name="Yoshikawa A."/>
            <person name="Zimmermann F.K."/>
            <person name="Sgouros J.G."/>
        </authorList>
    </citation>
    <scope>NUCLEOTIDE SEQUENCE [LARGE SCALE GENOMIC DNA]</scope>
    <source>
        <strain>ATCC 204508 / S288c</strain>
    </source>
</reference>
<reference key="3">
    <citation type="journal article" date="2014" name="G3 (Bethesda)">
        <title>The reference genome sequence of Saccharomyces cerevisiae: Then and now.</title>
        <authorList>
            <person name="Engel S.R."/>
            <person name="Dietrich F.S."/>
            <person name="Fisk D.G."/>
            <person name="Binkley G."/>
            <person name="Balakrishnan R."/>
            <person name="Costanzo M.C."/>
            <person name="Dwight S.S."/>
            <person name="Hitz B.C."/>
            <person name="Karra K."/>
            <person name="Nash R.S."/>
            <person name="Weng S."/>
            <person name="Wong E.D."/>
            <person name="Lloyd P."/>
            <person name="Skrzypek M.S."/>
            <person name="Miyasato S.R."/>
            <person name="Simison M."/>
            <person name="Cherry J.M."/>
        </authorList>
    </citation>
    <scope>GENOME REANNOTATION</scope>
    <source>
        <strain>ATCC 204508 / S288c</strain>
    </source>
</reference>
<reference key="4">
    <citation type="journal article" date="2007" name="Genome Res.">
        <title>Approaching a complete repository of sequence-verified protein-encoding clones for Saccharomyces cerevisiae.</title>
        <authorList>
            <person name="Hu Y."/>
            <person name="Rolfs A."/>
            <person name="Bhullar B."/>
            <person name="Murthy T.V.S."/>
            <person name="Zhu C."/>
            <person name="Berger M.F."/>
            <person name="Camargo A.A."/>
            <person name="Kelley F."/>
            <person name="McCarron S."/>
            <person name="Jepson D."/>
            <person name="Richardson A."/>
            <person name="Raphael J."/>
            <person name="Moreira D."/>
            <person name="Taycher E."/>
            <person name="Zuo D."/>
            <person name="Mohr S."/>
            <person name="Kane M.F."/>
            <person name="Williamson J."/>
            <person name="Simpson A.J.G."/>
            <person name="Bulyk M.L."/>
            <person name="Harlow E."/>
            <person name="Marsischky G."/>
            <person name="Kolodner R.D."/>
            <person name="LaBaer J."/>
        </authorList>
    </citation>
    <scope>NUCLEOTIDE SEQUENCE [GENOMIC DNA]</scope>
    <source>
        <strain>ATCC 204508 / S288c</strain>
    </source>
</reference>
<feature type="chain" id="PRO_0000202560" description="Uncharacterized protein YCR006C">
    <location>
        <begin position="1"/>
        <end position="157"/>
    </location>
</feature>
<keyword id="KW-1185">Reference proteome</keyword>
<proteinExistence type="predicted"/>
<name>YCP6_YEAST</name>
<sequence>MFIRVCNRLIYTPTNVLLITVEDGRISVLLWFRYAIPAELCYTRLARILRGKHCADFPQSCCHNISRFGVLNKSVLGSFNQWLGGISKERKLIARTFDAFIRWSSTRGEEVTTYFFLQKKSVTFSVARRLSGRQQWEAQRKNNNNGKRNYLLSVTFV</sequence>
<organism>
    <name type="scientific">Saccharomyces cerevisiae (strain ATCC 204508 / S288c)</name>
    <name type="common">Baker's yeast</name>
    <dbReference type="NCBI Taxonomy" id="559292"/>
    <lineage>
        <taxon>Eukaryota</taxon>
        <taxon>Fungi</taxon>
        <taxon>Dikarya</taxon>
        <taxon>Ascomycota</taxon>
        <taxon>Saccharomycotina</taxon>
        <taxon>Saccharomycetes</taxon>
        <taxon>Saccharomycetales</taxon>
        <taxon>Saccharomycetaceae</taxon>
        <taxon>Saccharomyces</taxon>
    </lineage>
</organism>